<proteinExistence type="inferred from homology"/>
<reference key="1">
    <citation type="journal article" date="2008" name="J. Bacteriol.">
        <title>Comparative genome sequence analysis of multidrug-resistant Acinetobacter baumannii.</title>
        <authorList>
            <person name="Adams M.D."/>
            <person name="Goglin K."/>
            <person name="Molyneaux N."/>
            <person name="Hujer K.M."/>
            <person name="Lavender H."/>
            <person name="Jamison J.J."/>
            <person name="MacDonald I.J."/>
            <person name="Martin K.M."/>
            <person name="Russo T."/>
            <person name="Campagnari A.A."/>
            <person name="Hujer A.M."/>
            <person name="Bonomo R.A."/>
            <person name="Gill S.R."/>
        </authorList>
    </citation>
    <scope>NUCLEOTIDE SEQUENCE [LARGE SCALE GENOMIC DNA]</scope>
    <source>
        <strain>AB307-0294</strain>
    </source>
</reference>
<protein>
    <recommendedName>
        <fullName evidence="1">CTP synthase</fullName>
        <ecNumber evidence="1">6.3.4.2</ecNumber>
    </recommendedName>
    <alternativeName>
        <fullName evidence="1">Cytidine 5'-triphosphate synthase</fullName>
    </alternativeName>
    <alternativeName>
        <fullName evidence="1">Cytidine triphosphate synthetase</fullName>
        <shortName evidence="1">CTP synthetase</shortName>
        <shortName evidence="1">CTPS</shortName>
    </alternativeName>
    <alternativeName>
        <fullName evidence="1">UTP--ammonia ligase</fullName>
    </alternativeName>
</protein>
<keyword id="KW-0067">ATP-binding</keyword>
<keyword id="KW-0315">Glutamine amidotransferase</keyword>
<keyword id="KW-0436">Ligase</keyword>
<keyword id="KW-0460">Magnesium</keyword>
<keyword id="KW-0479">Metal-binding</keyword>
<keyword id="KW-0547">Nucleotide-binding</keyword>
<keyword id="KW-0665">Pyrimidine biosynthesis</keyword>
<gene>
    <name evidence="1" type="primary">pyrG</name>
    <name type="ordered locus">ABBFA_001555</name>
</gene>
<comment type="function">
    <text evidence="1">Catalyzes the ATP-dependent amination of UTP to CTP with either L-glutamine or ammonia as the source of nitrogen. Regulates intracellular CTP levels through interactions with the four ribonucleotide triphosphates.</text>
</comment>
<comment type="catalytic activity">
    <reaction evidence="1">
        <text>UTP + L-glutamine + ATP + H2O = CTP + L-glutamate + ADP + phosphate + 2 H(+)</text>
        <dbReference type="Rhea" id="RHEA:26426"/>
        <dbReference type="ChEBI" id="CHEBI:15377"/>
        <dbReference type="ChEBI" id="CHEBI:15378"/>
        <dbReference type="ChEBI" id="CHEBI:29985"/>
        <dbReference type="ChEBI" id="CHEBI:30616"/>
        <dbReference type="ChEBI" id="CHEBI:37563"/>
        <dbReference type="ChEBI" id="CHEBI:43474"/>
        <dbReference type="ChEBI" id="CHEBI:46398"/>
        <dbReference type="ChEBI" id="CHEBI:58359"/>
        <dbReference type="ChEBI" id="CHEBI:456216"/>
        <dbReference type="EC" id="6.3.4.2"/>
    </reaction>
</comment>
<comment type="catalytic activity">
    <reaction evidence="1">
        <text>L-glutamine + H2O = L-glutamate + NH4(+)</text>
        <dbReference type="Rhea" id="RHEA:15889"/>
        <dbReference type="ChEBI" id="CHEBI:15377"/>
        <dbReference type="ChEBI" id="CHEBI:28938"/>
        <dbReference type="ChEBI" id="CHEBI:29985"/>
        <dbReference type="ChEBI" id="CHEBI:58359"/>
    </reaction>
</comment>
<comment type="catalytic activity">
    <reaction evidence="1">
        <text>UTP + NH4(+) + ATP = CTP + ADP + phosphate + 2 H(+)</text>
        <dbReference type="Rhea" id="RHEA:16597"/>
        <dbReference type="ChEBI" id="CHEBI:15378"/>
        <dbReference type="ChEBI" id="CHEBI:28938"/>
        <dbReference type="ChEBI" id="CHEBI:30616"/>
        <dbReference type="ChEBI" id="CHEBI:37563"/>
        <dbReference type="ChEBI" id="CHEBI:43474"/>
        <dbReference type="ChEBI" id="CHEBI:46398"/>
        <dbReference type="ChEBI" id="CHEBI:456216"/>
    </reaction>
</comment>
<comment type="activity regulation">
    <text evidence="1">Allosterically activated by GTP, when glutamine is the substrate; GTP has no effect on the reaction when ammonia is the substrate. The allosteric effector GTP functions by stabilizing the protein conformation that binds the tetrahedral intermediate(s) formed during glutamine hydrolysis. Inhibited by the product CTP, via allosteric rather than competitive inhibition.</text>
</comment>
<comment type="pathway">
    <text evidence="1">Pyrimidine metabolism; CTP biosynthesis via de novo pathway; CTP from UDP: step 2/2.</text>
</comment>
<comment type="subunit">
    <text evidence="1">Homotetramer.</text>
</comment>
<comment type="miscellaneous">
    <text evidence="1">CTPSs have evolved a hybrid strategy for distinguishing between UTP and CTP. The overlapping regions of the product feedback inhibitory and substrate sites recognize a common feature in both compounds, the triphosphate moiety. To differentiate isosteric substrate and product pyrimidine rings, an additional pocket far from the expected kinase/ligase catalytic site, specifically recognizes the cytosine and ribose portions of the product inhibitor.</text>
</comment>
<comment type="similarity">
    <text evidence="1">Belongs to the CTP synthase family.</text>
</comment>
<evidence type="ECO:0000255" key="1">
    <source>
        <dbReference type="HAMAP-Rule" id="MF_01227"/>
    </source>
</evidence>
<accession>B7H225</accession>
<sequence length="545" mass="60956">MTHFIFVTGGVVSSLGKGISAASVAALLEARGLKVTMVKMDPYINVDPGTMSPFQHGEVFVTEDGAETDLDLGYYERFLRRAKMTKLNNFTSGRVYQDVLNKERRGDYLGGTVQVIPHITDNIKERVLRAGEGYDVAIVEIGGTVGDIESLPFMESVRQLMVELGHKRTMLMHLTLLPYIKSAAELKTKPTQHSVKELLSIGIQPDILICRTEYDVDADTKRKIALFTNVEARAVVVCKDAKTIYQIPRGFYEQNVDDLICERFGFTDLPEADLTDWDNVVEALLNPEYTVRVAMVGKYVELPDAYKSVNEALLHAGIKNRVKVQIDYVNAEELESQDVSILKTADAILVPGGFGERGTEGKMKAIQYARENGIPFLGICLGMQLAVIEYARHVAGMPEASSTEFNRSTKYPLIGLITEWLDERGELQQRSLESDLGGTMRLGAQKSELVEGTKTREVYGKAEITERHRHRYEMNNRFIEAIEQAGMKISGYSSAQHLVETVEIPEHPWFIAVQFHPEFTSSPRDGHPLFASFIDAAKTQHQKSK</sequence>
<dbReference type="EC" id="6.3.4.2" evidence="1"/>
<dbReference type="EMBL" id="CP001172">
    <property type="protein sequence ID" value="ACJ58045.1"/>
    <property type="molecule type" value="Genomic_DNA"/>
</dbReference>
<dbReference type="RefSeq" id="WP_000148658.1">
    <property type="nucleotide sequence ID" value="NZ_CP001172.1"/>
</dbReference>
<dbReference type="SMR" id="B7H225"/>
<dbReference type="MEROPS" id="C26.964"/>
<dbReference type="HOGENOM" id="CLU_011675_5_0_6"/>
<dbReference type="UniPathway" id="UPA00159">
    <property type="reaction ID" value="UER00277"/>
</dbReference>
<dbReference type="Proteomes" id="UP000006924">
    <property type="component" value="Chromosome"/>
</dbReference>
<dbReference type="GO" id="GO:0005829">
    <property type="term" value="C:cytosol"/>
    <property type="evidence" value="ECO:0007669"/>
    <property type="project" value="TreeGrafter"/>
</dbReference>
<dbReference type="GO" id="GO:0005524">
    <property type="term" value="F:ATP binding"/>
    <property type="evidence" value="ECO:0007669"/>
    <property type="project" value="UniProtKB-KW"/>
</dbReference>
<dbReference type="GO" id="GO:0003883">
    <property type="term" value="F:CTP synthase activity"/>
    <property type="evidence" value="ECO:0007669"/>
    <property type="project" value="UniProtKB-UniRule"/>
</dbReference>
<dbReference type="GO" id="GO:0004359">
    <property type="term" value="F:glutaminase activity"/>
    <property type="evidence" value="ECO:0007669"/>
    <property type="project" value="RHEA"/>
</dbReference>
<dbReference type="GO" id="GO:0042802">
    <property type="term" value="F:identical protein binding"/>
    <property type="evidence" value="ECO:0007669"/>
    <property type="project" value="TreeGrafter"/>
</dbReference>
<dbReference type="GO" id="GO:0046872">
    <property type="term" value="F:metal ion binding"/>
    <property type="evidence" value="ECO:0007669"/>
    <property type="project" value="UniProtKB-KW"/>
</dbReference>
<dbReference type="GO" id="GO:0044210">
    <property type="term" value="P:'de novo' CTP biosynthetic process"/>
    <property type="evidence" value="ECO:0007669"/>
    <property type="project" value="UniProtKB-UniRule"/>
</dbReference>
<dbReference type="GO" id="GO:0019856">
    <property type="term" value="P:pyrimidine nucleobase biosynthetic process"/>
    <property type="evidence" value="ECO:0007669"/>
    <property type="project" value="TreeGrafter"/>
</dbReference>
<dbReference type="CDD" id="cd03113">
    <property type="entry name" value="CTPS_N"/>
    <property type="match status" value="1"/>
</dbReference>
<dbReference type="CDD" id="cd01746">
    <property type="entry name" value="GATase1_CTP_Synthase"/>
    <property type="match status" value="1"/>
</dbReference>
<dbReference type="FunFam" id="3.40.50.300:FF:000009">
    <property type="entry name" value="CTP synthase"/>
    <property type="match status" value="1"/>
</dbReference>
<dbReference type="FunFam" id="3.40.50.880:FF:000002">
    <property type="entry name" value="CTP synthase"/>
    <property type="match status" value="1"/>
</dbReference>
<dbReference type="Gene3D" id="3.40.50.880">
    <property type="match status" value="1"/>
</dbReference>
<dbReference type="Gene3D" id="3.40.50.300">
    <property type="entry name" value="P-loop containing nucleotide triphosphate hydrolases"/>
    <property type="match status" value="1"/>
</dbReference>
<dbReference type="HAMAP" id="MF_01227">
    <property type="entry name" value="PyrG"/>
    <property type="match status" value="1"/>
</dbReference>
<dbReference type="InterPro" id="IPR029062">
    <property type="entry name" value="Class_I_gatase-like"/>
</dbReference>
<dbReference type="InterPro" id="IPR004468">
    <property type="entry name" value="CTP_synthase"/>
</dbReference>
<dbReference type="InterPro" id="IPR017456">
    <property type="entry name" value="CTP_synthase_N"/>
</dbReference>
<dbReference type="InterPro" id="IPR017926">
    <property type="entry name" value="GATASE"/>
</dbReference>
<dbReference type="InterPro" id="IPR033828">
    <property type="entry name" value="GATase1_CTP_Synthase"/>
</dbReference>
<dbReference type="InterPro" id="IPR027417">
    <property type="entry name" value="P-loop_NTPase"/>
</dbReference>
<dbReference type="NCBIfam" id="NF003792">
    <property type="entry name" value="PRK05380.1"/>
    <property type="match status" value="1"/>
</dbReference>
<dbReference type="NCBIfam" id="TIGR00337">
    <property type="entry name" value="PyrG"/>
    <property type="match status" value="1"/>
</dbReference>
<dbReference type="PANTHER" id="PTHR11550">
    <property type="entry name" value="CTP SYNTHASE"/>
    <property type="match status" value="1"/>
</dbReference>
<dbReference type="PANTHER" id="PTHR11550:SF0">
    <property type="entry name" value="CTP SYNTHASE-RELATED"/>
    <property type="match status" value="1"/>
</dbReference>
<dbReference type="Pfam" id="PF06418">
    <property type="entry name" value="CTP_synth_N"/>
    <property type="match status" value="1"/>
</dbReference>
<dbReference type="Pfam" id="PF00117">
    <property type="entry name" value="GATase"/>
    <property type="match status" value="1"/>
</dbReference>
<dbReference type="SUPFAM" id="SSF52317">
    <property type="entry name" value="Class I glutamine amidotransferase-like"/>
    <property type="match status" value="1"/>
</dbReference>
<dbReference type="SUPFAM" id="SSF52540">
    <property type="entry name" value="P-loop containing nucleoside triphosphate hydrolases"/>
    <property type="match status" value="1"/>
</dbReference>
<dbReference type="PROSITE" id="PS51273">
    <property type="entry name" value="GATASE_TYPE_1"/>
    <property type="match status" value="1"/>
</dbReference>
<organism>
    <name type="scientific">Acinetobacter baumannii (strain AB307-0294)</name>
    <dbReference type="NCBI Taxonomy" id="557600"/>
    <lineage>
        <taxon>Bacteria</taxon>
        <taxon>Pseudomonadati</taxon>
        <taxon>Pseudomonadota</taxon>
        <taxon>Gammaproteobacteria</taxon>
        <taxon>Moraxellales</taxon>
        <taxon>Moraxellaceae</taxon>
        <taxon>Acinetobacter</taxon>
        <taxon>Acinetobacter calcoaceticus/baumannii complex</taxon>
    </lineage>
</organism>
<name>PYRG_ACIB3</name>
<feature type="chain" id="PRO_1000139355" description="CTP synthase">
    <location>
        <begin position="1"/>
        <end position="545"/>
    </location>
</feature>
<feature type="domain" description="Glutamine amidotransferase type-1" evidence="1">
    <location>
        <begin position="292"/>
        <end position="543"/>
    </location>
</feature>
<feature type="region of interest" description="Amidoligase domain" evidence="1">
    <location>
        <begin position="1"/>
        <end position="266"/>
    </location>
</feature>
<feature type="active site" description="Nucleophile; for glutamine hydrolysis" evidence="1">
    <location>
        <position position="380"/>
    </location>
</feature>
<feature type="active site" evidence="1">
    <location>
        <position position="516"/>
    </location>
</feature>
<feature type="active site" evidence="1">
    <location>
        <position position="518"/>
    </location>
</feature>
<feature type="binding site" evidence="1">
    <location>
        <position position="13"/>
    </location>
    <ligand>
        <name>CTP</name>
        <dbReference type="ChEBI" id="CHEBI:37563"/>
        <note>allosteric inhibitor</note>
    </ligand>
</feature>
<feature type="binding site" evidence="1">
    <location>
        <position position="13"/>
    </location>
    <ligand>
        <name>UTP</name>
        <dbReference type="ChEBI" id="CHEBI:46398"/>
    </ligand>
</feature>
<feature type="binding site" evidence="1">
    <location>
        <begin position="14"/>
        <end position="19"/>
    </location>
    <ligand>
        <name>ATP</name>
        <dbReference type="ChEBI" id="CHEBI:30616"/>
    </ligand>
</feature>
<feature type="binding site" evidence="1">
    <location>
        <position position="71"/>
    </location>
    <ligand>
        <name>ATP</name>
        <dbReference type="ChEBI" id="CHEBI:30616"/>
    </ligand>
</feature>
<feature type="binding site" evidence="1">
    <location>
        <position position="71"/>
    </location>
    <ligand>
        <name>Mg(2+)</name>
        <dbReference type="ChEBI" id="CHEBI:18420"/>
    </ligand>
</feature>
<feature type="binding site" evidence="1">
    <location>
        <position position="140"/>
    </location>
    <ligand>
        <name>Mg(2+)</name>
        <dbReference type="ChEBI" id="CHEBI:18420"/>
    </ligand>
</feature>
<feature type="binding site" evidence="1">
    <location>
        <begin position="147"/>
        <end position="149"/>
    </location>
    <ligand>
        <name>CTP</name>
        <dbReference type="ChEBI" id="CHEBI:37563"/>
        <note>allosteric inhibitor</note>
    </ligand>
</feature>
<feature type="binding site" evidence="1">
    <location>
        <begin position="187"/>
        <end position="192"/>
    </location>
    <ligand>
        <name>CTP</name>
        <dbReference type="ChEBI" id="CHEBI:37563"/>
        <note>allosteric inhibitor</note>
    </ligand>
</feature>
<feature type="binding site" evidence="1">
    <location>
        <begin position="187"/>
        <end position="192"/>
    </location>
    <ligand>
        <name>UTP</name>
        <dbReference type="ChEBI" id="CHEBI:46398"/>
    </ligand>
</feature>
<feature type="binding site" evidence="1">
    <location>
        <position position="223"/>
    </location>
    <ligand>
        <name>CTP</name>
        <dbReference type="ChEBI" id="CHEBI:37563"/>
        <note>allosteric inhibitor</note>
    </ligand>
</feature>
<feature type="binding site" evidence="1">
    <location>
        <position position="223"/>
    </location>
    <ligand>
        <name>UTP</name>
        <dbReference type="ChEBI" id="CHEBI:46398"/>
    </ligand>
</feature>
<feature type="binding site" evidence="1">
    <location>
        <begin position="239"/>
        <end position="241"/>
    </location>
    <ligand>
        <name>ATP</name>
        <dbReference type="ChEBI" id="CHEBI:30616"/>
    </ligand>
</feature>
<feature type="binding site" evidence="1">
    <location>
        <position position="353"/>
    </location>
    <ligand>
        <name>L-glutamine</name>
        <dbReference type="ChEBI" id="CHEBI:58359"/>
    </ligand>
</feature>
<feature type="binding site" evidence="1">
    <location>
        <begin position="381"/>
        <end position="384"/>
    </location>
    <ligand>
        <name>L-glutamine</name>
        <dbReference type="ChEBI" id="CHEBI:58359"/>
    </ligand>
</feature>
<feature type="binding site" evidence="1">
    <location>
        <position position="404"/>
    </location>
    <ligand>
        <name>L-glutamine</name>
        <dbReference type="ChEBI" id="CHEBI:58359"/>
    </ligand>
</feature>
<feature type="binding site" evidence="1">
    <location>
        <position position="471"/>
    </location>
    <ligand>
        <name>L-glutamine</name>
        <dbReference type="ChEBI" id="CHEBI:58359"/>
    </ligand>
</feature>